<name>LIPB_PSEPK</name>
<sequence length="216" mass="23689">MMSACLGFRELGLQPYEPVLEAMRRFTEQRSPDSQDEIWLVEHPAVFTQGQAGKAEHLLVPGDIPVVQTDRGGQVTYHGPGQLVAYLLLDVRRLGFGVRELVSRIELALIDLLASYAVQASAKPDAPGVYVDGAKIASLGLRIRNGRSFHGLALNVDMDLAPFRRINPCGYAGLAMTQLRDLAGPIELDEVRTRLRGQLVKHLDYAEQTTLTGGID</sequence>
<accession>Q88DM4</accession>
<reference key="1">
    <citation type="journal article" date="2002" name="Environ. Microbiol.">
        <title>Complete genome sequence and comparative analysis of the metabolically versatile Pseudomonas putida KT2440.</title>
        <authorList>
            <person name="Nelson K.E."/>
            <person name="Weinel C."/>
            <person name="Paulsen I.T."/>
            <person name="Dodson R.J."/>
            <person name="Hilbert H."/>
            <person name="Martins dos Santos V.A.P."/>
            <person name="Fouts D.E."/>
            <person name="Gill S.R."/>
            <person name="Pop M."/>
            <person name="Holmes M."/>
            <person name="Brinkac L.M."/>
            <person name="Beanan M.J."/>
            <person name="DeBoy R.T."/>
            <person name="Daugherty S.C."/>
            <person name="Kolonay J.F."/>
            <person name="Madupu R."/>
            <person name="Nelson W.C."/>
            <person name="White O."/>
            <person name="Peterson J.D."/>
            <person name="Khouri H.M."/>
            <person name="Hance I."/>
            <person name="Chris Lee P."/>
            <person name="Holtzapple E.K."/>
            <person name="Scanlan D."/>
            <person name="Tran K."/>
            <person name="Moazzez A."/>
            <person name="Utterback T.R."/>
            <person name="Rizzo M."/>
            <person name="Lee K."/>
            <person name="Kosack D."/>
            <person name="Moestl D."/>
            <person name="Wedler H."/>
            <person name="Lauber J."/>
            <person name="Stjepandic D."/>
            <person name="Hoheisel J."/>
            <person name="Straetz M."/>
            <person name="Heim S."/>
            <person name="Kiewitz C."/>
            <person name="Eisen J.A."/>
            <person name="Timmis K.N."/>
            <person name="Duesterhoeft A."/>
            <person name="Tuemmler B."/>
            <person name="Fraser C.M."/>
        </authorList>
    </citation>
    <scope>NUCLEOTIDE SEQUENCE [LARGE SCALE GENOMIC DNA]</scope>
    <source>
        <strain>ATCC 47054 / DSM 6125 / CFBP 8728 / NCIMB 11950 / KT2440</strain>
    </source>
</reference>
<organism>
    <name type="scientific">Pseudomonas putida (strain ATCC 47054 / DSM 6125 / CFBP 8728 / NCIMB 11950 / KT2440)</name>
    <dbReference type="NCBI Taxonomy" id="160488"/>
    <lineage>
        <taxon>Bacteria</taxon>
        <taxon>Pseudomonadati</taxon>
        <taxon>Pseudomonadota</taxon>
        <taxon>Gammaproteobacteria</taxon>
        <taxon>Pseudomonadales</taxon>
        <taxon>Pseudomonadaceae</taxon>
        <taxon>Pseudomonas</taxon>
    </lineage>
</organism>
<feature type="chain" id="PRO_0000062867" description="Octanoyltransferase">
    <location>
        <begin position="1"/>
        <end position="216"/>
    </location>
</feature>
<feature type="domain" description="BPL/LPL catalytic" evidence="2">
    <location>
        <begin position="32"/>
        <end position="207"/>
    </location>
</feature>
<feature type="active site" description="Acyl-thioester intermediate" evidence="1">
    <location>
        <position position="169"/>
    </location>
</feature>
<feature type="binding site" evidence="1">
    <location>
        <begin position="71"/>
        <end position="78"/>
    </location>
    <ligand>
        <name>substrate</name>
    </ligand>
</feature>
<feature type="binding site" evidence="1">
    <location>
        <begin position="138"/>
        <end position="140"/>
    </location>
    <ligand>
        <name>substrate</name>
    </ligand>
</feature>
<feature type="binding site" evidence="1">
    <location>
        <begin position="151"/>
        <end position="153"/>
    </location>
    <ligand>
        <name>substrate</name>
    </ligand>
</feature>
<feature type="site" description="Lowers pKa of active site Cys" evidence="1">
    <location>
        <position position="135"/>
    </location>
</feature>
<comment type="function">
    <text evidence="1">Catalyzes the transfer of endogenously produced octanoic acid from octanoyl-acyl-carrier-protein onto the lipoyl domains of lipoate-dependent enzymes. Lipoyl-ACP can also act as a substrate although octanoyl-ACP is likely to be the physiological substrate.</text>
</comment>
<comment type="catalytic activity">
    <reaction evidence="1">
        <text>octanoyl-[ACP] + L-lysyl-[protein] = N(6)-octanoyl-L-lysyl-[protein] + holo-[ACP] + H(+)</text>
        <dbReference type="Rhea" id="RHEA:17665"/>
        <dbReference type="Rhea" id="RHEA-COMP:9636"/>
        <dbReference type="Rhea" id="RHEA-COMP:9685"/>
        <dbReference type="Rhea" id="RHEA-COMP:9752"/>
        <dbReference type="Rhea" id="RHEA-COMP:9928"/>
        <dbReference type="ChEBI" id="CHEBI:15378"/>
        <dbReference type="ChEBI" id="CHEBI:29969"/>
        <dbReference type="ChEBI" id="CHEBI:64479"/>
        <dbReference type="ChEBI" id="CHEBI:78463"/>
        <dbReference type="ChEBI" id="CHEBI:78809"/>
        <dbReference type="EC" id="2.3.1.181"/>
    </reaction>
</comment>
<comment type="pathway">
    <text evidence="1">Protein modification; protein lipoylation via endogenous pathway; protein N(6)-(lipoyl)lysine from octanoyl-[acyl-carrier-protein]: step 1/2.</text>
</comment>
<comment type="subcellular location">
    <subcellularLocation>
        <location evidence="1">Cytoplasm</location>
    </subcellularLocation>
</comment>
<comment type="miscellaneous">
    <text evidence="1">In the reaction, the free carboxyl group of octanoic acid is attached via an amide linkage to the epsilon-amino group of a specific lysine residue of lipoyl domains of lipoate-dependent enzymes.</text>
</comment>
<comment type="similarity">
    <text evidence="1">Belongs to the LipB family.</text>
</comment>
<keyword id="KW-0012">Acyltransferase</keyword>
<keyword id="KW-0963">Cytoplasm</keyword>
<keyword id="KW-1185">Reference proteome</keyword>
<keyword id="KW-0808">Transferase</keyword>
<evidence type="ECO:0000255" key="1">
    <source>
        <dbReference type="HAMAP-Rule" id="MF_00013"/>
    </source>
</evidence>
<evidence type="ECO:0000255" key="2">
    <source>
        <dbReference type="PROSITE-ProRule" id="PRU01067"/>
    </source>
</evidence>
<proteinExistence type="inferred from homology"/>
<protein>
    <recommendedName>
        <fullName evidence="1">Octanoyltransferase</fullName>
        <ecNumber evidence="1">2.3.1.181</ecNumber>
    </recommendedName>
    <alternativeName>
        <fullName evidence="1">Lipoate-protein ligase B</fullName>
    </alternativeName>
    <alternativeName>
        <fullName evidence="1">Lipoyl/octanoyl transferase</fullName>
    </alternativeName>
    <alternativeName>
        <fullName evidence="1">Octanoyl-[acyl-carrier-protein]-protein N-octanoyltransferase</fullName>
    </alternativeName>
</protein>
<dbReference type="EC" id="2.3.1.181" evidence="1"/>
<dbReference type="EMBL" id="AE015451">
    <property type="protein sequence ID" value="AAN70370.1"/>
    <property type="molecule type" value="Genomic_DNA"/>
</dbReference>
<dbReference type="RefSeq" id="NP_746906.1">
    <property type="nucleotide sequence ID" value="NC_002947.4"/>
</dbReference>
<dbReference type="SMR" id="Q88DM4"/>
<dbReference type="STRING" id="160488.PP_4801"/>
<dbReference type="PaxDb" id="160488-PP_4801"/>
<dbReference type="KEGG" id="ppu:PP_4801"/>
<dbReference type="PATRIC" id="fig|160488.4.peg.5123"/>
<dbReference type="eggNOG" id="COG0321">
    <property type="taxonomic scope" value="Bacteria"/>
</dbReference>
<dbReference type="HOGENOM" id="CLU_035168_3_1_6"/>
<dbReference type="OrthoDB" id="9787061at2"/>
<dbReference type="PhylomeDB" id="Q88DM4"/>
<dbReference type="BioCyc" id="PPUT160488:G1G01-5138-MONOMER"/>
<dbReference type="UniPathway" id="UPA00538">
    <property type="reaction ID" value="UER00592"/>
</dbReference>
<dbReference type="Proteomes" id="UP000000556">
    <property type="component" value="Chromosome"/>
</dbReference>
<dbReference type="GO" id="GO:0005737">
    <property type="term" value="C:cytoplasm"/>
    <property type="evidence" value="ECO:0007669"/>
    <property type="project" value="UniProtKB-SubCell"/>
</dbReference>
<dbReference type="GO" id="GO:0033819">
    <property type="term" value="F:lipoyl(octanoyl) transferase activity"/>
    <property type="evidence" value="ECO:0007669"/>
    <property type="project" value="UniProtKB-EC"/>
</dbReference>
<dbReference type="GO" id="GO:0036211">
    <property type="term" value="P:protein modification process"/>
    <property type="evidence" value="ECO:0007669"/>
    <property type="project" value="InterPro"/>
</dbReference>
<dbReference type="CDD" id="cd16444">
    <property type="entry name" value="LipB"/>
    <property type="match status" value="1"/>
</dbReference>
<dbReference type="FunFam" id="3.30.930.10:FF:000020">
    <property type="entry name" value="Octanoyltransferase"/>
    <property type="match status" value="1"/>
</dbReference>
<dbReference type="Gene3D" id="3.30.930.10">
    <property type="entry name" value="Bira Bifunctional Protein, Domain 2"/>
    <property type="match status" value="1"/>
</dbReference>
<dbReference type="HAMAP" id="MF_00013">
    <property type="entry name" value="LipB"/>
    <property type="match status" value="1"/>
</dbReference>
<dbReference type="InterPro" id="IPR045864">
    <property type="entry name" value="aa-tRNA-synth_II/BPL/LPL"/>
</dbReference>
<dbReference type="InterPro" id="IPR004143">
    <property type="entry name" value="BPL_LPL_catalytic"/>
</dbReference>
<dbReference type="InterPro" id="IPR000544">
    <property type="entry name" value="Octanoyltransferase"/>
</dbReference>
<dbReference type="InterPro" id="IPR020605">
    <property type="entry name" value="Octanoyltransferase_CS"/>
</dbReference>
<dbReference type="NCBIfam" id="TIGR00214">
    <property type="entry name" value="lipB"/>
    <property type="match status" value="1"/>
</dbReference>
<dbReference type="NCBIfam" id="NF010922">
    <property type="entry name" value="PRK14342.1"/>
    <property type="match status" value="1"/>
</dbReference>
<dbReference type="PANTHER" id="PTHR10993:SF7">
    <property type="entry name" value="LIPOYLTRANSFERASE 2, MITOCHONDRIAL-RELATED"/>
    <property type="match status" value="1"/>
</dbReference>
<dbReference type="PANTHER" id="PTHR10993">
    <property type="entry name" value="OCTANOYLTRANSFERASE"/>
    <property type="match status" value="1"/>
</dbReference>
<dbReference type="Pfam" id="PF21948">
    <property type="entry name" value="LplA-B_cat"/>
    <property type="match status" value="1"/>
</dbReference>
<dbReference type="PIRSF" id="PIRSF016262">
    <property type="entry name" value="LPLase"/>
    <property type="match status" value="1"/>
</dbReference>
<dbReference type="SUPFAM" id="SSF55681">
    <property type="entry name" value="Class II aaRS and biotin synthetases"/>
    <property type="match status" value="1"/>
</dbReference>
<dbReference type="PROSITE" id="PS51733">
    <property type="entry name" value="BPL_LPL_CATALYTIC"/>
    <property type="match status" value="1"/>
</dbReference>
<dbReference type="PROSITE" id="PS01313">
    <property type="entry name" value="LIPB"/>
    <property type="match status" value="1"/>
</dbReference>
<gene>
    <name evidence="1" type="primary">lipB</name>
    <name type="ordered locus">PP_4801</name>
</gene>